<gene>
    <name evidence="1" type="primary">thiC</name>
    <name type="ordered locus">PSPPH_0535</name>
</gene>
<accession>Q48P32</accession>
<sequence length="629" mass="69545">MSTTLKNAAHLSESAQVDSGSVQPFTRSQKIYVQGSRPDIRVPMREITLDVTPTDFGGEINAPVTVYDTSGPYTDPNVIIDVRKGLADVRSPWIDSRNDTERLAGLSSNFGQQRLSDAELTALRFAHVRNPRRANAGANVSQMHYARQGIITAEMEYVAIRENMKLQEARAAGLRTQQNAGHSFGASIPKEITAEFVREEIARGRAIIPANINHVELEPMIIGRNFLVKINGNIGNSALGSSIEEEVAKLTWGIRWGSDTVMDLSTGKHIHETREWIIRNSPVPIGTVPIYQALEKVGGAAEDLTWELFRDTLIEQAEQGVDYFTIHAGVLLRYVPLTAKRVTGIVSRGGSIMAKWCLAHHQENFLYTHFEDICEIMKAYDVSFSLGDGLRPGSIADANDAAQFGELETLGELTKIAWKHDVQTMIEGPGHVPMQLIKENMDKQLECCDEAPFYTLGPLTTDIAPGYDHITSGIGAAMIGWFGCAMLCYVTPKEHLGLPNKDDVKTGIITYKIAAHAADLAKGHPGAQIRDNALSKARFEFRWEDQFNLGLDPDTARSYHDETLPKDSAKVAHFCSMCGPKFCSMKITQEVREYAANQRIEAVDVDVAKGLAEQAERFKQEGSQLYKKV</sequence>
<protein>
    <recommendedName>
        <fullName evidence="1">Phosphomethylpyrimidine synthase</fullName>
        <ecNumber evidence="1">4.1.99.17</ecNumber>
    </recommendedName>
    <alternativeName>
        <fullName evidence="1">Hydroxymethylpyrimidine phosphate synthase</fullName>
        <shortName evidence="1">HMP-P synthase</shortName>
        <shortName evidence="1">HMP-phosphate synthase</shortName>
        <shortName evidence="1">HMPP synthase</shortName>
    </alternativeName>
    <alternativeName>
        <fullName evidence="1">Thiamine biosynthesis protein ThiC</fullName>
    </alternativeName>
</protein>
<feature type="chain" id="PRO_0000242289" description="Phosphomethylpyrimidine synthase">
    <location>
        <begin position="1"/>
        <end position="629"/>
    </location>
</feature>
<feature type="region of interest" description="Disordered" evidence="2">
    <location>
        <begin position="1"/>
        <end position="20"/>
    </location>
</feature>
<feature type="binding site" evidence="1">
    <location>
        <position position="233"/>
    </location>
    <ligand>
        <name>substrate</name>
    </ligand>
</feature>
<feature type="binding site" evidence="1">
    <location>
        <position position="262"/>
    </location>
    <ligand>
        <name>substrate</name>
    </ligand>
</feature>
<feature type="binding site" evidence="1">
    <location>
        <position position="291"/>
    </location>
    <ligand>
        <name>substrate</name>
    </ligand>
</feature>
<feature type="binding site" evidence="1">
    <location>
        <position position="327"/>
    </location>
    <ligand>
        <name>substrate</name>
    </ligand>
</feature>
<feature type="binding site" evidence="1">
    <location>
        <begin position="347"/>
        <end position="349"/>
    </location>
    <ligand>
        <name>substrate</name>
    </ligand>
</feature>
<feature type="binding site" evidence="1">
    <location>
        <begin position="388"/>
        <end position="391"/>
    </location>
    <ligand>
        <name>substrate</name>
    </ligand>
</feature>
<feature type="binding site" evidence="1">
    <location>
        <position position="427"/>
    </location>
    <ligand>
        <name>substrate</name>
    </ligand>
</feature>
<feature type="binding site" evidence="1">
    <location>
        <position position="431"/>
    </location>
    <ligand>
        <name>Zn(2+)</name>
        <dbReference type="ChEBI" id="CHEBI:29105"/>
    </ligand>
</feature>
<feature type="binding site" evidence="1">
    <location>
        <position position="454"/>
    </location>
    <ligand>
        <name>substrate</name>
    </ligand>
</feature>
<feature type="binding site" evidence="1">
    <location>
        <position position="495"/>
    </location>
    <ligand>
        <name>Zn(2+)</name>
        <dbReference type="ChEBI" id="CHEBI:29105"/>
    </ligand>
</feature>
<feature type="binding site" evidence="1">
    <location>
        <position position="575"/>
    </location>
    <ligand>
        <name>[4Fe-4S] cluster</name>
        <dbReference type="ChEBI" id="CHEBI:49883"/>
        <note>4Fe-4S-S-AdoMet</note>
    </ligand>
</feature>
<feature type="binding site" evidence="1">
    <location>
        <position position="578"/>
    </location>
    <ligand>
        <name>[4Fe-4S] cluster</name>
        <dbReference type="ChEBI" id="CHEBI:49883"/>
        <note>4Fe-4S-S-AdoMet</note>
    </ligand>
</feature>
<feature type="binding site" evidence="1">
    <location>
        <position position="583"/>
    </location>
    <ligand>
        <name>[4Fe-4S] cluster</name>
        <dbReference type="ChEBI" id="CHEBI:49883"/>
        <note>4Fe-4S-S-AdoMet</note>
    </ligand>
</feature>
<dbReference type="EC" id="4.1.99.17" evidence="1"/>
<dbReference type="EMBL" id="CP000058">
    <property type="protein sequence ID" value="AAZ35394.1"/>
    <property type="molecule type" value="Genomic_DNA"/>
</dbReference>
<dbReference type="RefSeq" id="WP_011167543.1">
    <property type="nucleotide sequence ID" value="NC_005773.3"/>
</dbReference>
<dbReference type="SMR" id="Q48P32"/>
<dbReference type="KEGG" id="psp:PSPPH_0535"/>
<dbReference type="eggNOG" id="COG0422">
    <property type="taxonomic scope" value="Bacteria"/>
</dbReference>
<dbReference type="HOGENOM" id="CLU_013181_2_1_6"/>
<dbReference type="UniPathway" id="UPA00060"/>
<dbReference type="Proteomes" id="UP000000551">
    <property type="component" value="Chromosome"/>
</dbReference>
<dbReference type="GO" id="GO:0005829">
    <property type="term" value="C:cytosol"/>
    <property type="evidence" value="ECO:0007669"/>
    <property type="project" value="TreeGrafter"/>
</dbReference>
<dbReference type="GO" id="GO:0051539">
    <property type="term" value="F:4 iron, 4 sulfur cluster binding"/>
    <property type="evidence" value="ECO:0007669"/>
    <property type="project" value="UniProtKB-KW"/>
</dbReference>
<dbReference type="GO" id="GO:0016830">
    <property type="term" value="F:carbon-carbon lyase activity"/>
    <property type="evidence" value="ECO:0007669"/>
    <property type="project" value="InterPro"/>
</dbReference>
<dbReference type="GO" id="GO:0008270">
    <property type="term" value="F:zinc ion binding"/>
    <property type="evidence" value="ECO:0007669"/>
    <property type="project" value="UniProtKB-UniRule"/>
</dbReference>
<dbReference type="GO" id="GO:0009228">
    <property type="term" value="P:thiamine biosynthetic process"/>
    <property type="evidence" value="ECO:0007669"/>
    <property type="project" value="UniProtKB-KW"/>
</dbReference>
<dbReference type="GO" id="GO:0009229">
    <property type="term" value="P:thiamine diphosphate biosynthetic process"/>
    <property type="evidence" value="ECO:0007669"/>
    <property type="project" value="UniProtKB-UniRule"/>
</dbReference>
<dbReference type="FunFam" id="3.20.20.540:FF:000001">
    <property type="entry name" value="Phosphomethylpyrimidine synthase"/>
    <property type="match status" value="1"/>
</dbReference>
<dbReference type="Gene3D" id="6.10.250.620">
    <property type="match status" value="1"/>
</dbReference>
<dbReference type="Gene3D" id="3.20.20.540">
    <property type="entry name" value="Radical SAM ThiC family, central domain"/>
    <property type="match status" value="1"/>
</dbReference>
<dbReference type="HAMAP" id="MF_00089">
    <property type="entry name" value="ThiC"/>
    <property type="match status" value="1"/>
</dbReference>
<dbReference type="InterPro" id="IPR037509">
    <property type="entry name" value="ThiC"/>
</dbReference>
<dbReference type="InterPro" id="IPR025747">
    <property type="entry name" value="ThiC-associated_dom"/>
</dbReference>
<dbReference type="InterPro" id="IPR038521">
    <property type="entry name" value="ThiC/Bza_core_dom"/>
</dbReference>
<dbReference type="InterPro" id="IPR002817">
    <property type="entry name" value="ThiC/BzaA/B"/>
</dbReference>
<dbReference type="NCBIfam" id="NF006763">
    <property type="entry name" value="PRK09284.1"/>
    <property type="match status" value="1"/>
</dbReference>
<dbReference type="NCBIfam" id="NF009895">
    <property type="entry name" value="PRK13352.1"/>
    <property type="match status" value="1"/>
</dbReference>
<dbReference type="NCBIfam" id="TIGR00190">
    <property type="entry name" value="thiC"/>
    <property type="match status" value="1"/>
</dbReference>
<dbReference type="PANTHER" id="PTHR30557:SF1">
    <property type="entry name" value="PHOSPHOMETHYLPYRIMIDINE SYNTHASE, CHLOROPLASTIC"/>
    <property type="match status" value="1"/>
</dbReference>
<dbReference type="PANTHER" id="PTHR30557">
    <property type="entry name" value="THIAMINE BIOSYNTHESIS PROTEIN THIC"/>
    <property type="match status" value="1"/>
</dbReference>
<dbReference type="Pfam" id="PF13667">
    <property type="entry name" value="ThiC-associated"/>
    <property type="match status" value="1"/>
</dbReference>
<dbReference type="Pfam" id="PF01964">
    <property type="entry name" value="ThiC_Rad_SAM"/>
    <property type="match status" value="1"/>
</dbReference>
<dbReference type="SFLD" id="SFLDF00407">
    <property type="entry name" value="phosphomethylpyrimidine_syntha"/>
    <property type="match status" value="1"/>
</dbReference>
<dbReference type="SFLD" id="SFLDG01114">
    <property type="entry name" value="phosphomethylpyrimidine_syntha"/>
    <property type="match status" value="1"/>
</dbReference>
<dbReference type="SFLD" id="SFLDS00113">
    <property type="entry name" value="Radical_SAM_Phosphomethylpyrim"/>
    <property type="match status" value="1"/>
</dbReference>
<keyword id="KW-0004">4Fe-4S</keyword>
<keyword id="KW-0408">Iron</keyword>
<keyword id="KW-0411">Iron-sulfur</keyword>
<keyword id="KW-0456">Lyase</keyword>
<keyword id="KW-0479">Metal-binding</keyword>
<keyword id="KW-0949">S-adenosyl-L-methionine</keyword>
<keyword id="KW-0784">Thiamine biosynthesis</keyword>
<keyword id="KW-0862">Zinc</keyword>
<proteinExistence type="inferred from homology"/>
<name>THIC_PSE14</name>
<organism>
    <name type="scientific">Pseudomonas savastanoi pv. phaseolicola (strain 1448A / Race 6)</name>
    <name type="common">Pseudomonas syringae pv. phaseolicola (strain 1448A / Race 6)</name>
    <dbReference type="NCBI Taxonomy" id="264730"/>
    <lineage>
        <taxon>Bacteria</taxon>
        <taxon>Pseudomonadati</taxon>
        <taxon>Pseudomonadota</taxon>
        <taxon>Gammaproteobacteria</taxon>
        <taxon>Pseudomonadales</taxon>
        <taxon>Pseudomonadaceae</taxon>
        <taxon>Pseudomonas</taxon>
    </lineage>
</organism>
<comment type="function">
    <text evidence="1">Catalyzes the synthesis of the hydroxymethylpyrimidine phosphate (HMP-P) moiety of thiamine from aminoimidazole ribotide (AIR) in a radical S-adenosyl-L-methionine (SAM)-dependent reaction.</text>
</comment>
<comment type="catalytic activity">
    <reaction evidence="1">
        <text>5-amino-1-(5-phospho-beta-D-ribosyl)imidazole + S-adenosyl-L-methionine = 4-amino-2-methyl-5-(phosphooxymethyl)pyrimidine + CO + 5'-deoxyadenosine + formate + L-methionine + 3 H(+)</text>
        <dbReference type="Rhea" id="RHEA:24840"/>
        <dbReference type="ChEBI" id="CHEBI:15378"/>
        <dbReference type="ChEBI" id="CHEBI:15740"/>
        <dbReference type="ChEBI" id="CHEBI:17245"/>
        <dbReference type="ChEBI" id="CHEBI:17319"/>
        <dbReference type="ChEBI" id="CHEBI:57844"/>
        <dbReference type="ChEBI" id="CHEBI:58354"/>
        <dbReference type="ChEBI" id="CHEBI:59789"/>
        <dbReference type="ChEBI" id="CHEBI:137981"/>
        <dbReference type="EC" id="4.1.99.17"/>
    </reaction>
</comment>
<comment type="cofactor">
    <cofactor evidence="1">
        <name>[4Fe-4S] cluster</name>
        <dbReference type="ChEBI" id="CHEBI:49883"/>
    </cofactor>
    <text evidence="1">Binds 1 [4Fe-4S] cluster per subunit. The cluster is coordinated with 3 cysteines and an exchangeable S-adenosyl-L-methionine.</text>
</comment>
<comment type="pathway">
    <text evidence="1">Cofactor biosynthesis; thiamine diphosphate biosynthesis.</text>
</comment>
<comment type="subunit">
    <text evidence="1">Homodimer.</text>
</comment>
<comment type="similarity">
    <text evidence="1">Belongs to the ThiC family.</text>
</comment>
<evidence type="ECO:0000255" key="1">
    <source>
        <dbReference type="HAMAP-Rule" id="MF_00089"/>
    </source>
</evidence>
<evidence type="ECO:0000256" key="2">
    <source>
        <dbReference type="SAM" id="MobiDB-lite"/>
    </source>
</evidence>
<reference key="1">
    <citation type="journal article" date="2005" name="J. Bacteriol.">
        <title>Whole-genome sequence analysis of Pseudomonas syringae pv. phaseolicola 1448A reveals divergence among pathovars in genes involved in virulence and transposition.</title>
        <authorList>
            <person name="Joardar V."/>
            <person name="Lindeberg M."/>
            <person name="Jackson R.W."/>
            <person name="Selengut J."/>
            <person name="Dodson R."/>
            <person name="Brinkac L.M."/>
            <person name="Daugherty S.C."/>
            <person name="DeBoy R.T."/>
            <person name="Durkin A.S."/>
            <person name="Gwinn Giglio M."/>
            <person name="Madupu R."/>
            <person name="Nelson W.C."/>
            <person name="Rosovitz M.J."/>
            <person name="Sullivan S.A."/>
            <person name="Crabtree J."/>
            <person name="Creasy T."/>
            <person name="Davidsen T.M."/>
            <person name="Haft D.H."/>
            <person name="Zafar N."/>
            <person name="Zhou L."/>
            <person name="Halpin R."/>
            <person name="Holley T."/>
            <person name="Khouri H.M."/>
            <person name="Feldblyum T.V."/>
            <person name="White O."/>
            <person name="Fraser C.M."/>
            <person name="Chatterjee A.K."/>
            <person name="Cartinhour S."/>
            <person name="Schneider D."/>
            <person name="Mansfield J.W."/>
            <person name="Collmer A."/>
            <person name="Buell R."/>
        </authorList>
    </citation>
    <scope>NUCLEOTIDE SEQUENCE [LARGE SCALE GENOMIC DNA]</scope>
    <source>
        <strain>1448A / Race 6</strain>
    </source>
</reference>